<gene>
    <name evidence="1" type="primary">folD</name>
    <name type="ordered locus">aq_1898</name>
</gene>
<dbReference type="EC" id="1.5.1.5" evidence="1"/>
<dbReference type="EC" id="3.5.4.9" evidence="1"/>
<dbReference type="EMBL" id="AE000657">
    <property type="protein sequence ID" value="AAC07700.1"/>
    <property type="molecule type" value="Genomic_DNA"/>
</dbReference>
<dbReference type="PIR" id="F70463">
    <property type="entry name" value="F70463"/>
</dbReference>
<dbReference type="RefSeq" id="NP_214304.1">
    <property type="nucleotide sequence ID" value="NC_000918.1"/>
</dbReference>
<dbReference type="RefSeq" id="WP_010881240.1">
    <property type="nucleotide sequence ID" value="NC_000918.1"/>
</dbReference>
<dbReference type="SMR" id="O67736"/>
<dbReference type="FunCoup" id="O67736">
    <property type="interactions" value="424"/>
</dbReference>
<dbReference type="STRING" id="224324.aq_1898"/>
<dbReference type="EnsemblBacteria" id="AAC07700">
    <property type="protein sequence ID" value="AAC07700"/>
    <property type="gene ID" value="aq_1898"/>
</dbReference>
<dbReference type="KEGG" id="aae:aq_1898"/>
<dbReference type="PATRIC" id="fig|224324.8.peg.1470"/>
<dbReference type="eggNOG" id="COG0190">
    <property type="taxonomic scope" value="Bacteria"/>
</dbReference>
<dbReference type="HOGENOM" id="CLU_034045_2_1_0"/>
<dbReference type="InParanoid" id="O67736"/>
<dbReference type="OrthoDB" id="9803580at2"/>
<dbReference type="UniPathway" id="UPA00193"/>
<dbReference type="Proteomes" id="UP000000798">
    <property type="component" value="Chromosome"/>
</dbReference>
<dbReference type="GO" id="GO:0005829">
    <property type="term" value="C:cytosol"/>
    <property type="evidence" value="ECO:0000318"/>
    <property type="project" value="GO_Central"/>
</dbReference>
<dbReference type="GO" id="GO:0004477">
    <property type="term" value="F:methenyltetrahydrofolate cyclohydrolase activity"/>
    <property type="evidence" value="ECO:0000318"/>
    <property type="project" value="GO_Central"/>
</dbReference>
<dbReference type="GO" id="GO:0004488">
    <property type="term" value="F:methylenetetrahydrofolate dehydrogenase (NADP+) activity"/>
    <property type="evidence" value="ECO:0000318"/>
    <property type="project" value="GO_Central"/>
</dbReference>
<dbReference type="GO" id="GO:0000105">
    <property type="term" value="P:L-histidine biosynthetic process"/>
    <property type="evidence" value="ECO:0007669"/>
    <property type="project" value="UniProtKB-KW"/>
</dbReference>
<dbReference type="GO" id="GO:0009086">
    <property type="term" value="P:methionine biosynthetic process"/>
    <property type="evidence" value="ECO:0007669"/>
    <property type="project" value="UniProtKB-KW"/>
</dbReference>
<dbReference type="GO" id="GO:0006164">
    <property type="term" value="P:purine nucleotide biosynthetic process"/>
    <property type="evidence" value="ECO:0007669"/>
    <property type="project" value="UniProtKB-KW"/>
</dbReference>
<dbReference type="GO" id="GO:0035999">
    <property type="term" value="P:tetrahydrofolate interconversion"/>
    <property type="evidence" value="ECO:0000318"/>
    <property type="project" value="GO_Central"/>
</dbReference>
<dbReference type="CDD" id="cd01080">
    <property type="entry name" value="NAD_bind_m-THF_DH_Cyclohyd"/>
    <property type="match status" value="1"/>
</dbReference>
<dbReference type="FunFam" id="3.40.50.10860:FF:000001">
    <property type="entry name" value="Bifunctional protein FolD"/>
    <property type="match status" value="1"/>
</dbReference>
<dbReference type="FunFam" id="3.40.50.720:FF:000094">
    <property type="entry name" value="Bifunctional protein FolD"/>
    <property type="match status" value="1"/>
</dbReference>
<dbReference type="Gene3D" id="3.40.50.10860">
    <property type="entry name" value="Leucine Dehydrogenase, chain A, domain 1"/>
    <property type="match status" value="1"/>
</dbReference>
<dbReference type="Gene3D" id="3.40.50.720">
    <property type="entry name" value="NAD(P)-binding Rossmann-like Domain"/>
    <property type="match status" value="1"/>
</dbReference>
<dbReference type="HAMAP" id="MF_01576">
    <property type="entry name" value="THF_DHG_CYH"/>
    <property type="match status" value="1"/>
</dbReference>
<dbReference type="InterPro" id="IPR046346">
    <property type="entry name" value="Aminoacid_DH-like_N_sf"/>
</dbReference>
<dbReference type="InterPro" id="IPR036291">
    <property type="entry name" value="NAD(P)-bd_dom_sf"/>
</dbReference>
<dbReference type="InterPro" id="IPR000672">
    <property type="entry name" value="THF_DH/CycHdrlase"/>
</dbReference>
<dbReference type="InterPro" id="IPR020630">
    <property type="entry name" value="THF_DH/CycHdrlase_cat_dom"/>
</dbReference>
<dbReference type="InterPro" id="IPR020867">
    <property type="entry name" value="THF_DH/CycHdrlase_CS"/>
</dbReference>
<dbReference type="InterPro" id="IPR020631">
    <property type="entry name" value="THF_DH/CycHdrlase_NAD-bd_dom"/>
</dbReference>
<dbReference type="NCBIfam" id="NF008058">
    <property type="entry name" value="PRK10792.1"/>
    <property type="match status" value="1"/>
</dbReference>
<dbReference type="NCBIfam" id="NF010783">
    <property type="entry name" value="PRK14186.1"/>
    <property type="match status" value="1"/>
</dbReference>
<dbReference type="PANTHER" id="PTHR48099:SF5">
    <property type="entry name" value="C-1-TETRAHYDROFOLATE SYNTHASE, CYTOPLASMIC"/>
    <property type="match status" value="1"/>
</dbReference>
<dbReference type="PANTHER" id="PTHR48099">
    <property type="entry name" value="C-1-TETRAHYDROFOLATE SYNTHASE, CYTOPLASMIC-RELATED"/>
    <property type="match status" value="1"/>
</dbReference>
<dbReference type="Pfam" id="PF00763">
    <property type="entry name" value="THF_DHG_CYH"/>
    <property type="match status" value="1"/>
</dbReference>
<dbReference type="Pfam" id="PF02882">
    <property type="entry name" value="THF_DHG_CYH_C"/>
    <property type="match status" value="1"/>
</dbReference>
<dbReference type="PRINTS" id="PR00085">
    <property type="entry name" value="THFDHDRGNASE"/>
</dbReference>
<dbReference type="SUPFAM" id="SSF53223">
    <property type="entry name" value="Aminoacid dehydrogenase-like, N-terminal domain"/>
    <property type="match status" value="1"/>
</dbReference>
<dbReference type="SUPFAM" id="SSF51735">
    <property type="entry name" value="NAD(P)-binding Rossmann-fold domains"/>
    <property type="match status" value="1"/>
</dbReference>
<dbReference type="PROSITE" id="PS00766">
    <property type="entry name" value="THF_DHG_CYH_1"/>
    <property type="match status" value="1"/>
</dbReference>
<dbReference type="PROSITE" id="PS00767">
    <property type="entry name" value="THF_DHG_CYH_2"/>
    <property type="match status" value="1"/>
</dbReference>
<feature type="chain" id="PRO_0000268262" description="Bifunctional protein FolD">
    <location>
        <begin position="1"/>
        <end position="291"/>
    </location>
</feature>
<feature type="binding site" evidence="1">
    <location>
        <begin position="166"/>
        <end position="168"/>
    </location>
    <ligand>
        <name>NADP(+)</name>
        <dbReference type="ChEBI" id="CHEBI:58349"/>
    </ligand>
</feature>
<feature type="binding site" evidence="1">
    <location>
        <position position="191"/>
    </location>
    <ligand>
        <name>NADP(+)</name>
        <dbReference type="ChEBI" id="CHEBI:58349"/>
    </ligand>
</feature>
<feature type="binding site" evidence="1">
    <location>
        <position position="232"/>
    </location>
    <ligand>
        <name>NADP(+)</name>
        <dbReference type="ChEBI" id="CHEBI:58349"/>
    </ligand>
</feature>
<evidence type="ECO:0000255" key="1">
    <source>
        <dbReference type="HAMAP-Rule" id="MF_01576"/>
    </source>
</evidence>
<proteinExistence type="inferred from homology"/>
<accession>O67736</accession>
<sequence length="291" mass="31930">MALILDGKSLSKKIREEIKKEVENFTSKGFRPPALAVILVGNDPASEIYVNNKRKACEKVGIKSLFYHLPQDVSEEKLLGLIYELNMNEEVDGILVQLPLPKHIDQTRVILSISPEKDVDGFHPENMGKLVAQIEDGFIPCTPLGIDILLKHYGIDVKGKDVTIVGAGFIVGRPLSLLMLWRNATVSVCHIHTKDVKKFTKEADILISATGVPHLIKEDMIKEGAVVVDVGISRLNGKIVGDVDFERVKEKASAITPVPGGVGPMTVTALLLNTLKSYKRKFAHLISTTNP</sequence>
<protein>
    <recommendedName>
        <fullName evidence="1">Bifunctional protein FolD</fullName>
    </recommendedName>
    <domain>
        <recommendedName>
            <fullName evidence="1">Methylenetetrahydrofolate dehydrogenase</fullName>
            <ecNumber evidence="1">1.5.1.5</ecNumber>
        </recommendedName>
    </domain>
    <domain>
        <recommendedName>
            <fullName evidence="1">Methenyltetrahydrofolate cyclohydrolase</fullName>
            <ecNumber evidence="1">3.5.4.9</ecNumber>
        </recommendedName>
    </domain>
</protein>
<reference key="1">
    <citation type="journal article" date="1998" name="Nature">
        <title>The complete genome of the hyperthermophilic bacterium Aquifex aeolicus.</title>
        <authorList>
            <person name="Deckert G."/>
            <person name="Warren P.V."/>
            <person name="Gaasterland T."/>
            <person name="Young W.G."/>
            <person name="Lenox A.L."/>
            <person name="Graham D.E."/>
            <person name="Overbeek R."/>
            <person name="Snead M.A."/>
            <person name="Keller M."/>
            <person name="Aujay M."/>
            <person name="Huber R."/>
            <person name="Feldman R.A."/>
            <person name="Short J.M."/>
            <person name="Olsen G.J."/>
            <person name="Swanson R.V."/>
        </authorList>
    </citation>
    <scope>NUCLEOTIDE SEQUENCE [LARGE SCALE GENOMIC DNA]</scope>
    <source>
        <strain>VF5</strain>
    </source>
</reference>
<name>FOLD_AQUAE</name>
<comment type="function">
    <text evidence="1">Catalyzes the oxidation of 5,10-methylenetetrahydrofolate to 5,10-methenyltetrahydrofolate and then the hydrolysis of 5,10-methenyltetrahydrofolate to 10-formyltetrahydrofolate.</text>
</comment>
<comment type="catalytic activity">
    <reaction evidence="1">
        <text>(6R)-5,10-methylene-5,6,7,8-tetrahydrofolate + NADP(+) = (6R)-5,10-methenyltetrahydrofolate + NADPH</text>
        <dbReference type="Rhea" id="RHEA:22812"/>
        <dbReference type="ChEBI" id="CHEBI:15636"/>
        <dbReference type="ChEBI" id="CHEBI:57455"/>
        <dbReference type="ChEBI" id="CHEBI:57783"/>
        <dbReference type="ChEBI" id="CHEBI:58349"/>
        <dbReference type="EC" id="1.5.1.5"/>
    </reaction>
</comment>
<comment type="catalytic activity">
    <reaction evidence="1">
        <text>(6R)-5,10-methenyltetrahydrofolate + H2O = (6R)-10-formyltetrahydrofolate + H(+)</text>
        <dbReference type="Rhea" id="RHEA:23700"/>
        <dbReference type="ChEBI" id="CHEBI:15377"/>
        <dbReference type="ChEBI" id="CHEBI:15378"/>
        <dbReference type="ChEBI" id="CHEBI:57455"/>
        <dbReference type="ChEBI" id="CHEBI:195366"/>
        <dbReference type="EC" id="3.5.4.9"/>
    </reaction>
</comment>
<comment type="pathway">
    <text evidence="1">One-carbon metabolism; tetrahydrofolate interconversion.</text>
</comment>
<comment type="subunit">
    <text evidence="1">Homodimer.</text>
</comment>
<comment type="similarity">
    <text evidence="1">Belongs to the tetrahydrofolate dehydrogenase/cyclohydrolase family.</text>
</comment>
<organism>
    <name type="scientific">Aquifex aeolicus (strain VF5)</name>
    <dbReference type="NCBI Taxonomy" id="224324"/>
    <lineage>
        <taxon>Bacteria</taxon>
        <taxon>Pseudomonadati</taxon>
        <taxon>Aquificota</taxon>
        <taxon>Aquificia</taxon>
        <taxon>Aquificales</taxon>
        <taxon>Aquificaceae</taxon>
        <taxon>Aquifex</taxon>
    </lineage>
</organism>
<keyword id="KW-0028">Amino-acid biosynthesis</keyword>
<keyword id="KW-0368">Histidine biosynthesis</keyword>
<keyword id="KW-0378">Hydrolase</keyword>
<keyword id="KW-0486">Methionine biosynthesis</keyword>
<keyword id="KW-0511">Multifunctional enzyme</keyword>
<keyword id="KW-0521">NADP</keyword>
<keyword id="KW-0554">One-carbon metabolism</keyword>
<keyword id="KW-0560">Oxidoreductase</keyword>
<keyword id="KW-0658">Purine biosynthesis</keyword>
<keyword id="KW-1185">Reference proteome</keyword>